<protein>
    <recommendedName>
        <fullName>Neuronal pentraxin-1</fullName>
        <shortName>NP1</shortName>
    </recommendedName>
    <alternativeName>
        <fullName>47 kDa taipoxin-binding protein</fullName>
    </alternativeName>
    <alternativeName>
        <fullName>Neuronal pentraxin I</fullName>
        <shortName>NP-I</shortName>
    </alternativeName>
</protein>
<sequence length="432" mass="47216">MLAGRAARTCALLALCLLGSRAQDFGPTRFICTSVPVDADMCAASVAAGGAEELRSNVLQLRETVLQQKETILSQKETIRELTTKLGRCESQSTLDAGPGEARSGGGRKQPGSGKNTMGDLSRTPASETLSQLGQTLQSLKTRLENLEQYSRLNSSSQTNSLKDLLQSKIDDLERQVLSRVNTLEEGKGGPKNDTEERAKIESALTSLHQRISELEKGQKDNRPGDKFQLTFPLRTNYMYAKVKKSLPEMYAFTVCMWLKSSAAPGVGTPFSYAVPGQANELVLIEWGNNPMEILINDKVAKLPFVINDGKWHHICVTWTTRDGVWEAYQDGTQGGNGENLAPYHPIKPQGVLVLGQEQDTLGGGFDATQAFVGELAHFNIWDRKLTPGEVYNLATCSSKALSGNVIAWAESQIEIFGGATKWTFEACRQIN</sequence>
<proteinExistence type="evidence at protein level"/>
<organism>
    <name type="scientific">Rattus norvegicus</name>
    <name type="common">Rat</name>
    <dbReference type="NCBI Taxonomy" id="10116"/>
    <lineage>
        <taxon>Eukaryota</taxon>
        <taxon>Metazoa</taxon>
        <taxon>Chordata</taxon>
        <taxon>Craniata</taxon>
        <taxon>Vertebrata</taxon>
        <taxon>Euteleostomi</taxon>
        <taxon>Mammalia</taxon>
        <taxon>Eutheria</taxon>
        <taxon>Euarchontoglires</taxon>
        <taxon>Glires</taxon>
        <taxon>Rodentia</taxon>
        <taxon>Myomorpha</taxon>
        <taxon>Muroidea</taxon>
        <taxon>Muridae</taxon>
        <taxon>Murinae</taxon>
        <taxon>Rattus</taxon>
    </lineage>
</organism>
<keyword id="KW-0106">Calcium</keyword>
<keyword id="KW-0968">Cytoplasmic vesicle</keyword>
<keyword id="KW-0903">Direct protein sequencing</keyword>
<keyword id="KW-1015">Disulfide bond</keyword>
<keyword id="KW-0256">Endoplasmic reticulum</keyword>
<keyword id="KW-0325">Glycoprotein</keyword>
<keyword id="KW-0479">Metal-binding</keyword>
<keyword id="KW-1185">Reference proteome</keyword>
<keyword id="KW-0964">Secreted</keyword>
<keyword id="KW-0732">Signal</keyword>
<comment type="function">
    <text evidence="6">May be involved in mediating uptake of synaptic material during synapse remodeling or in mediating the synaptic clustering of AMPA glutamate receptors at a subset of excitatory synapses.</text>
</comment>
<comment type="cofactor">
    <cofactor evidence="1">
        <name>Ca(2+)</name>
        <dbReference type="ChEBI" id="CHEBI:29108"/>
    </cofactor>
    <text evidence="1">Binds 2 calcium ions per subunit.</text>
</comment>
<comment type="subunit">
    <text evidence="6">Homooligomer or heterooligomer (probably pentamer) with neuronal pentraxin receptor (NPTXR).</text>
</comment>
<comment type="subcellular location">
    <subcellularLocation>
        <location evidence="2">Secreted</location>
    </subcellularLocation>
    <subcellularLocation>
        <location evidence="7">Cytoplasmic vesicle</location>
        <location evidence="7">Secretory vesicle</location>
    </subcellularLocation>
    <subcellularLocation>
        <location evidence="7">Endoplasmic reticulum</location>
    </subcellularLocation>
</comment>
<comment type="tissue specificity">
    <text>Cerebellum, hippocampus and cerebral cortex.</text>
</comment>
<comment type="PTM">
    <text>Glycosylated.</text>
</comment>
<dbReference type="EMBL" id="U18772">
    <property type="protein sequence ID" value="AAA92685.1"/>
    <property type="molecule type" value="mRNA"/>
</dbReference>
<dbReference type="RefSeq" id="NP_714957.1">
    <property type="nucleotide sequence ID" value="NM_153735.4"/>
</dbReference>
<dbReference type="SMR" id="P47971"/>
<dbReference type="BioGRID" id="251819">
    <property type="interactions" value="3"/>
</dbReference>
<dbReference type="CORUM" id="P47971"/>
<dbReference type="FunCoup" id="P47971">
    <property type="interactions" value="1438"/>
</dbReference>
<dbReference type="IntAct" id="P47971">
    <property type="interactions" value="1"/>
</dbReference>
<dbReference type="MINT" id="P47971"/>
<dbReference type="STRING" id="10116.ENSRNOP00000005067"/>
<dbReference type="GlyCosmos" id="P47971">
    <property type="glycosylation" value="2 sites, 9 glycans"/>
</dbReference>
<dbReference type="GlyGen" id="P47971">
    <property type="glycosylation" value="2 sites, 9 N-linked glycans (1 site)"/>
</dbReference>
<dbReference type="iPTMnet" id="P47971"/>
<dbReference type="PhosphoSitePlus" id="P47971"/>
<dbReference type="PaxDb" id="10116-ENSRNOP00000005067"/>
<dbReference type="Ensembl" id="ENSRNOT00000005067.7">
    <property type="protein sequence ID" value="ENSRNOP00000005067.6"/>
    <property type="gene ID" value="ENSRNOG00000003741.7"/>
</dbReference>
<dbReference type="GeneID" id="266777"/>
<dbReference type="KEGG" id="rno:266777"/>
<dbReference type="AGR" id="RGD:628894"/>
<dbReference type="CTD" id="4884"/>
<dbReference type="RGD" id="628894">
    <property type="gene designation" value="Nptx1"/>
</dbReference>
<dbReference type="eggNOG" id="ENOG502QTID">
    <property type="taxonomic scope" value="Eukaryota"/>
</dbReference>
<dbReference type="GeneTree" id="ENSGT01060000248591"/>
<dbReference type="HOGENOM" id="CLU_032051_0_0_1"/>
<dbReference type="InParanoid" id="P47971"/>
<dbReference type="OMA" id="GDMCAAT"/>
<dbReference type="OrthoDB" id="8871962at2759"/>
<dbReference type="PhylomeDB" id="P47971"/>
<dbReference type="TreeFam" id="TF330208"/>
<dbReference type="PRO" id="PR:P47971"/>
<dbReference type="Proteomes" id="UP000002494">
    <property type="component" value="Chromosome 10"/>
</dbReference>
<dbReference type="GO" id="GO:0005783">
    <property type="term" value="C:endoplasmic reticulum"/>
    <property type="evidence" value="ECO:0007669"/>
    <property type="project" value="UniProtKB-SubCell"/>
</dbReference>
<dbReference type="GO" id="GO:0098978">
    <property type="term" value="C:glutamatergic synapse"/>
    <property type="evidence" value="ECO:0000314"/>
    <property type="project" value="SynGO"/>
</dbReference>
<dbReference type="GO" id="GO:0043083">
    <property type="term" value="C:synaptic cleft"/>
    <property type="evidence" value="ECO:0000314"/>
    <property type="project" value="SynGO"/>
</dbReference>
<dbReference type="GO" id="GO:0030133">
    <property type="term" value="C:transport vesicle"/>
    <property type="evidence" value="ECO:0007669"/>
    <property type="project" value="UniProtKB-SubCell"/>
</dbReference>
<dbReference type="GO" id="GO:0046872">
    <property type="term" value="F:metal ion binding"/>
    <property type="evidence" value="ECO:0007669"/>
    <property type="project" value="UniProtKB-KW"/>
</dbReference>
<dbReference type="GO" id="GO:0060385">
    <property type="term" value="P:axonogenesis involved in innervation"/>
    <property type="evidence" value="ECO:0000266"/>
    <property type="project" value="RGD"/>
</dbReference>
<dbReference type="GO" id="GO:0071333">
    <property type="term" value="P:cellular response to glucose stimulus"/>
    <property type="evidence" value="ECO:0000270"/>
    <property type="project" value="RGD"/>
</dbReference>
<dbReference type="GO" id="GO:0035865">
    <property type="term" value="P:cellular response to potassium ion"/>
    <property type="evidence" value="ECO:0000314"/>
    <property type="project" value="RGD"/>
</dbReference>
<dbReference type="GO" id="GO:0043653">
    <property type="term" value="P:mitochondrial fragmentation involved in apoptotic process"/>
    <property type="evidence" value="ECO:0000315"/>
    <property type="project" value="RGD"/>
</dbReference>
<dbReference type="GO" id="GO:0006839">
    <property type="term" value="P:mitochondrial transport"/>
    <property type="evidence" value="ECO:0000315"/>
    <property type="project" value="RGD"/>
</dbReference>
<dbReference type="GO" id="GO:0099645">
    <property type="term" value="P:neurotransmitter receptor localization to postsynaptic specialization membrane"/>
    <property type="evidence" value="ECO:0000314"/>
    <property type="project" value="SynGO"/>
</dbReference>
<dbReference type="GO" id="GO:0097107">
    <property type="term" value="P:postsynaptic density assembly"/>
    <property type="evidence" value="ECO:0000314"/>
    <property type="project" value="SynGO"/>
</dbReference>
<dbReference type="CDD" id="cd00152">
    <property type="entry name" value="PTX"/>
    <property type="match status" value="1"/>
</dbReference>
<dbReference type="FunFam" id="2.60.120.200:FF:000012">
    <property type="entry name" value="neuronal pentraxin receptor"/>
    <property type="match status" value="1"/>
</dbReference>
<dbReference type="Gene3D" id="2.60.120.200">
    <property type="match status" value="1"/>
</dbReference>
<dbReference type="InterPro" id="IPR013320">
    <property type="entry name" value="ConA-like_dom_sf"/>
</dbReference>
<dbReference type="InterPro" id="IPR051360">
    <property type="entry name" value="Neuronal_Pentraxin_Related"/>
</dbReference>
<dbReference type="InterPro" id="IPR030476">
    <property type="entry name" value="Pentaxin_CS"/>
</dbReference>
<dbReference type="InterPro" id="IPR001759">
    <property type="entry name" value="Pentraxin-related"/>
</dbReference>
<dbReference type="PANTHER" id="PTHR19277:SF24">
    <property type="entry name" value="NEURONAL PENTRAXIN-1"/>
    <property type="match status" value="1"/>
</dbReference>
<dbReference type="PANTHER" id="PTHR19277">
    <property type="entry name" value="PENTRAXIN"/>
    <property type="match status" value="1"/>
</dbReference>
<dbReference type="Pfam" id="PF00354">
    <property type="entry name" value="Pentaxin"/>
    <property type="match status" value="1"/>
</dbReference>
<dbReference type="PRINTS" id="PR00895">
    <property type="entry name" value="PENTAXIN"/>
</dbReference>
<dbReference type="SMART" id="SM00159">
    <property type="entry name" value="PTX"/>
    <property type="match status" value="1"/>
</dbReference>
<dbReference type="SUPFAM" id="SSF49899">
    <property type="entry name" value="Concanavalin A-like lectins/glucanases"/>
    <property type="match status" value="1"/>
</dbReference>
<dbReference type="PROSITE" id="PS00289">
    <property type="entry name" value="PTX_1"/>
    <property type="match status" value="1"/>
</dbReference>
<dbReference type="PROSITE" id="PS51828">
    <property type="entry name" value="PTX_2"/>
    <property type="match status" value="1"/>
</dbReference>
<accession>P47971</accession>
<name>NPTX1_RAT</name>
<evidence type="ECO:0000250" key="1"/>
<evidence type="ECO:0000250" key="2">
    <source>
        <dbReference type="UniProtKB" id="Q15818"/>
    </source>
</evidence>
<evidence type="ECO:0000255" key="3"/>
<evidence type="ECO:0000255" key="4">
    <source>
        <dbReference type="PROSITE-ProRule" id="PRU01172"/>
    </source>
</evidence>
<evidence type="ECO:0000256" key="5">
    <source>
        <dbReference type="SAM" id="MobiDB-lite"/>
    </source>
</evidence>
<evidence type="ECO:0000269" key="6">
    <source>
    </source>
</evidence>
<evidence type="ECO:0000305" key="7"/>
<evidence type="ECO:0007744" key="8">
    <source>
    </source>
</evidence>
<feature type="signal peptide" evidence="3">
    <location>
        <begin position="1"/>
        <end position="22"/>
    </location>
</feature>
<feature type="chain" id="PRO_0000023549" description="Neuronal pentraxin-1">
    <location>
        <begin position="23"/>
        <end position="432"/>
    </location>
</feature>
<feature type="domain" description="Pentraxin (PTX)" evidence="4">
    <location>
        <begin position="226"/>
        <end position="428"/>
    </location>
</feature>
<feature type="region of interest" description="Disordered" evidence="5">
    <location>
        <begin position="90"/>
        <end position="128"/>
    </location>
</feature>
<feature type="binding site" evidence="1">
    <location>
        <position position="280"/>
    </location>
    <ligand>
        <name>Ca(2+)</name>
        <dbReference type="ChEBI" id="CHEBI:29108"/>
        <label>1</label>
    </ligand>
</feature>
<feature type="binding site" evidence="1">
    <location>
        <position position="358"/>
    </location>
    <ligand>
        <name>Ca(2+)</name>
        <dbReference type="ChEBI" id="CHEBI:29108"/>
        <label>1</label>
    </ligand>
</feature>
<feature type="binding site" evidence="4">
    <location>
        <position position="358"/>
    </location>
    <ligand>
        <name>Ca(2+)</name>
        <dbReference type="ChEBI" id="CHEBI:29108"/>
        <label>2</label>
    </ligand>
</feature>
<feature type="binding site" evidence="1">
    <location>
        <position position="359"/>
    </location>
    <ligand>
        <name>Ca(2+)</name>
        <dbReference type="ChEBI" id="CHEBI:29108"/>
        <label>1</label>
    </ligand>
</feature>
<feature type="binding site" evidence="1">
    <location>
        <position position="360"/>
    </location>
    <ligand>
        <name>Ca(2+)</name>
        <dbReference type="ChEBI" id="CHEBI:29108"/>
        <label>1</label>
    </ligand>
</feature>
<feature type="binding site" evidence="4">
    <location>
        <position position="360"/>
    </location>
    <ligand>
        <name>Ca(2+)</name>
        <dbReference type="ChEBI" id="CHEBI:29108"/>
        <label>2</label>
    </ligand>
</feature>
<feature type="binding site" evidence="4">
    <location>
        <position position="370"/>
    </location>
    <ligand>
        <name>Ca(2+)</name>
        <dbReference type="ChEBI" id="CHEBI:29108"/>
        <label>2</label>
    </ligand>
</feature>
<feature type="glycosylation site" description="N-linked (GlcNAc...) asparagine" evidence="8">
    <location>
        <position position="154"/>
    </location>
</feature>
<feature type="glycosylation site" description="N-linked (GlcNAc...) asparagine" evidence="3">
    <location>
        <position position="193"/>
    </location>
</feature>
<feature type="disulfide bond" evidence="4">
    <location>
        <begin position="256"/>
        <end position="316"/>
    </location>
</feature>
<reference key="1">
    <citation type="journal article" date="1995" name="Neuron">
        <title>Neuronal pentraxin, a secreted protein with homology to acute phase proteins of the immune system.</title>
        <authorList>
            <person name="Schlimgen A.K."/>
            <person name="Helms J.A."/>
            <person name="Vogel H."/>
            <person name="Perin M.S."/>
        </authorList>
    </citation>
    <scope>NUCLEOTIDE SEQUENCE [MRNA]</scope>
    <scope>PROTEIN SEQUENCE OF 40-80; 119-153 AND 293-337</scope>
    <source>
        <strain>Sprague-Dawley</strain>
    </source>
</reference>
<reference key="2">
    <citation type="journal article" date="2000" name="J. Biol. Chem.">
        <title>Biochemical interactions of the neuronal pentraxins. Neuronal pentraxin (NP) receptor binds to taipoxin and taipoxin-associated calcium-binding protein 49 via NP1 and NP2.</title>
        <authorList>
            <person name="Kirkpatrick L.L."/>
            <person name="Matzuk M.M."/>
            <person name="Dodds D.C."/>
            <person name="Perin M.S."/>
        </authorList>
    </citation>
    <scope>FUNCTION</scope>
    <scope>SUBUNIT</scope>
</reference>
<reference key="3">
    <citation type="journal article" date="2013" name="J. Proteome Res.">
        <title>Site-specific glycan-peptide analysis for determination of N-glycoproteome heterogeneity.</title>
        <authorList>
            <person name="Parker B.L."/>
            <person name="Thaysen-Andersen M."/>
            <person name="Solis N."/>
            <person name="Scott N.E."/>
            <person name="Larsen M.R."/>
            <person name="Graham M.E."/>
            <person name="Packer N.H."/>
            <person name="Cordwell S.J."/>
        </authorList>
    </citation>
    <scope>GLYCOSYLATION [LARGE SCALE ANALYSIS] AT ASN-154</scope>
    <scope>IDENTIFICATION BY MASS SPECTROMETRY [LARGE SCALE ANALYSIS]</scope>
    <source>
        <tissue>Brain</tissue>
    </source>
</reference>
<gene>
    <name type="primary">Nptx1</name>
</gene>